<proteinExistence type="inferred from homology"/>
<name>UREF_DECAR</name>
<evidence type="ECO:0000255" key="1">
    <source>
        <dbReference type="HAMAP-Rule" id="MF_01385"/>
    </source>
</evidence>
<dbReference type="EMBL" id="CP000089">
    <property type="protein sequence ID" value="AAZ46174.1"/>
    <property type="molecule type" value="Genomic_DNA"/>
</dbReference>
<dbReference type="SMR" id="Q47G57"/>
<dbReference type="STRING" id="159087.Daro_1425"/>
<dbReference type="KEGG" id="dar:Daro_1425"/>
<dbReference type="eggNOG" id="COG0830">
    <property type="taxonomic scope" value="Bacteria"/>
</dbReference>
<dbReference type="HOGENOM" id="CLU_049215_2_1_4"/>
<dbReference type="OrthoDB" id="9798772at2"/>
<dbReference type="GO" id="GO:0005737">
    <property type="term" value="C:cytoplasm"/>
    <property type="evidence" value="ECO:0007669"/>
    <property type="project" value="UniProtKB-SubCell"/>
</dbReference>
<dbReference type="GO" id="GO:0016151">
    <property type="term" value="F:nickel cation binding"/>
    <property type="evidence" value="ECO:0007669"/>
    <property type="project" value="UniProtKB-UniRule"/>
</dbReference>
<dbReference type="Gene3D" id="1.10.4190.10">
    <property type="entry name" value="Urease accessory protein UreF"/>
    <property type="match status" value="1"/>
</dbReference>
<dbReference type="HAMAP" id="MF_01385">
    <property type="entry name" value="UreF"/>
    <property type="match status" value="1"/>
</dbReference>
<dbReference type="InterPro" id="IPR002639">
    <property type="entry name" value="UreF"/>
</dbReference>
<dbReference type="InterPro" id="IPR038277">
    <property type="entry name" value="UreF_sf"/>
</dbReference>
<dbReference type="PANTHER" id="PTHR33620">
    <property type="entry name" value="UREASE ACCESSORY PROTEIN F"/>
    <property type="match status" value="1"/>
</dbReference>
<dbReference type="PANTHER" id="PTHR33620:SF1">
    <property type="entry name" value="UREASE ACCESSORY PROTEIN F"/>
    <property type="match status" value="1"/>
</dbReference>
<dbReference type="Pfam" id="PF01730">
    <property type="entry name" value="UreF"/>
    <property type="match status" value="1"/>
</dbReference>
<dbReference type="PIRSF" id="PIRSF009467">
    <property type="entry name" value="Ureas_acces_UreF"/>
    <property type="match status" value="1"/>
</dbReference>
<feature type="chain" id="PRO_0000344118" description="Urease accessory protein UreF">
    <location>
        <begin position="1"/>
        <end position="228"/>
    </location>
</feature>
<reference key="1">
    <citation type="journal article" date="2009" name="BMC Genomics">
        <title>Metabolic analysis of the soil microbe Dechloromonas aromatica str. RCB: indications of a surprisingly complex life-style and cryptic anaerobic pathways for aromatic degradation.</title>
        <authorList>
            <person name="Salinero K.K."/>
            <person name="Keller K."/>
            <person name="Feil W.S."/>
            <person name="Feil H."/>
            <person name="Trong S."/>
            <person name="Di Bartolo G."/>
            <person name="Lapidus A."/>
        </authorList>
    </citation>
    <scope>NUCLEOTIDE SEQUENCE [LARGE SCALE GENOMIC DNA]</scope>
    <source>
        <strain>RCB</strain>
    </source>
</reference>
<protein>
    <recommendedName>
        <fullName evidence="1">Urease accessory protein UreF</fullName>
    </recommendedName>
</protein>
<keyword id="KW-0143">Chaperone</keyword>
<keyword id="KW-0963">Cytoplasm</keyword>
<keyword id="KW-0996">Nickel insertion</keyword>
<sequence length="228" mass="24861">MKTCLQLARLLQLASPTLPVGAYTYSQGLEWAVESGVIRDEASAGRWIADLMHHGIGCYEAPMVAALMTAWSAGDVDEIECLNAEFLASRESAELRAETVQMGFSMRRLLRDLRDDTLAAVATLVETQAEVAFPTVWSGIAAAWQIEPEAAVTAYLWSWAENQVMAALKAVPLGQASGQRLLAELGSRIPEAAANANTLPKSRWSNFTPAFAIACARHETQYSRLFRS</sequence>
<gene>
    <name evidence="1" type="primary">ureF</name>
    <name type="ordered locus">Daro_1425</name>
</gene>
<comment type="function">
    <text evidence="1">Required for maturation of urease via the functional incorporation of the urease nickel metallocenter.</text>
</comment>
<comment type="subunit">
    <text evidence="1">UreD, UreF and UreG form a complex that acts as a GTP-hydrolysis-dependent molecular chaperone, activating the urease apoprotein by helping to assemble the nickel containing metallocenter of UreC. The UreE protein probably delivers the nickel.</text>
</comment>
<comment type="subcellular location">
    <subcellularLocation>
        <location evidence="1">Cytoplasm</location>
    </subcellularLocation>
</comment>
<comment type="similarity">
    <text evidence="1">Belongs to the UreF family.</text>
</comment>
<organism>
    <name type="scientific">Dechloromonas aromatica (strain RCB)</name>
    <dbReference type="NCBI Taxonomy" id="159087"/>
    <lineage>
        <taxon>Bacteria</taxon>
        <taxon>Pseudomonadati</taxon>
        <taxon>Pseudomonadota</taxon>
        <taxon>Betaproteobacteria</taxon>
        <taxon>Rhodocyclales</taxon>
        <taxon>Azonexaceae</taxon>
        <taxon>Dechloromonas</taxon>
    </lineage>
</organism>
<accession>Q47G57</accession>